<gene>
    <name type="primary">H</name>
    <name type="synonym">cex</name>
</gene>
<evidence type="ECO:0000255" key="1">
    <source>
        <dbReference type="PROSITE-ProRule" id="PRU00303"/>
    </source>
</evidence>
<evidence type="ECO:0000305" key="2"/>
<feature type="signal peptide" evidence="1">
    <location>
        <begin position="1"/>
        <end position="21"/>
    </location>
</feature>
<feature type="chain" id="PRO_0000005679" description="Lysis protein">
    <location>
        <begin position="22"/>
        <end position="49"/>
    </location>
</feature>
<feature type="lipid moiety-binding region" description="N-palmitoyl cysteine" evidence="1">
    <location>
        <position position="22"/>
    </location>
</feature>
<feature type="lipid moiety-binding region" description="S-diacylglycerol cysteine" evidence="1">
    <location>
        <position position="22"/>
    </location>
</feature>
<organism>
    <name type="scientific">Escherichia coli</name>
    <dbReference type="NCBI Taxonomy" id="562"/>
    <lineage>
        <taxon>Bacteria</taxon>
        <taxon>Pseudomonadati</taxon>
        <taxon>Pseudomonadota</taxon>
        <taxon>Gammaproteobacteria</taxon>
        <taxon>Enterobacterales</taxon>
        <taxon>Enterobacteriaceae</taxon>
        <taxon>Escherichia</taxon>
    </lineage>
</organism>
<proteinExistence type="inferred from homology"/>
<name>LYS0_ECOLX</name>
<geneLocation type="plasmid">
    <name>Clo DF13</name>
</geneLocation>
<comment type="function">
    <text>Lysis proteins are required for both colicin release and partial cell lysis.</text>
</comment>
<comment type="subcellular location">
    <subcellularLocation>
        <location evidence="2">Cell outer membrane</location>
        <topology evidence="1">Lipid-anchor</topology>
    </subcellularLocation>
    <text>Targeted by SRP to the Sec translocon.</text>
</comment>
<comment type="miscellaneous">
    <text>Plasmid Clo DF13 originates from Enterobacter cloacae but is stably maintained in and studied mostly from E.coli.</text>
</comment>
<keyword id="KW-0998">Cell outer membrane</keyword>
<keyword id="KW-0449">Lipoprotein</keyword>
<keyword id="KW-0472">Membrane</keyword>
<keyword id="KW-0564">Palmitate</keyword>
<keyword id="KW-0614">Plasmid</keyword>
<keyword id="KW-0732">Signal</keyword>
<protein>
    <recommendedName>
        <fullName>Lysis protein</fullName>
    </recommendedName>
    <alternativeName>
        <fullName>Bacteriocin release protein</fullName>
        <shortName>BRP</shortName>
    </alternativeName>
    <alternativeName>
        <fullName>Protein H</fullName>
    </alternativeName>
</protein>
<accession>P02987</accession>
<sequence>MKKAKAIFLFILIVSGFLLVACQANYIRDVQGGTVAPSSSSELTGIAVQ</sequence>
<dbReference type="EMBL" id="X04466">
    <property type="protein sequence ID" value="CAA28145.1"/>
    <property type="molecule type" value="Genomic_DNA"/>
</dbReference>
<dbReference type="PIR" id="A03515">
    <property type="entry name" value="ZHECP3"/>
</dbReference>
<dbReference type="RefSeq" id="NP_052370.1">
    <property type="nucleotide sequence ID" value="NC_002119.1"/>
</dbReference>
<dbReference type="RefSeq" id="WP_010891188.1">
    <property type="nucleotide sequence ID" value="NZ_UNQR01000060.1"/>
</dbReference>
<dbReference type="GO" id="GO:0009279">
    <property type="term" value="C:cell outer membrane"/>
    <property type="evidence" value="ECO:0007669"/>
    <property type="project" value="UniProtKB-SubCell"/>
</dbReference>
<dbReference type="GO" id="GO:0019835">
    <property type="term" value="P:cytolysis"/>
    <property type="evidence" value="ECO:0007669"/>
    <property type="project" value="InterPro"/>
</dbReference>
<dbReference type="InterPro" id="IPR003059">
    <property type="entry name" value="Lysis_col"/>
</dbReference>
<dbReference type="Pfam" id="PF02402">
    <property type="entry name" value="Lysis_col"/>
    <property type="match status" value="1"/>
</dbReference>
<dbReference type="PRINTS" id="PR01297">
    <property type="entry name" value="LYSISCOLICIN"/>
</dbReference>
<dbReference type="PROSITE" id="PS51257">
    <property type="entry name" value="PROKAR_LIPOPROTEIN"/>
    <property type="match status" value="1"/>
</dbReference>
<reference key="1">
    <citation type="journal article" date="1986" name="Plasmid">
        <title>The complete nucleotide sequence of the bacteriocinogenic plasmid CloDF13.</title>
        <authorList>
            <person name="Nijkamp H.J.J."/>
            <person name="de Lang R."/>
            <person name="Stuitje A.R."/>
            <person name="van den Elsen P.J.M."/>
            <person name="Veltkamp E."/>
            <person name="van Putten A.J."/>
        </authorList>
    </citation>
    <scope>NUCLEOTIDE SEQUENCE [GENOMIC DNA]</scope>
</reference>
<reference key="2">
    <citation type="journal article" date="1981" name="Nature">
        <title>Identification of mutations affecting replication control of plasmid Clo DF13.</title>
        <authorList>
            <person name="Stuitje A.R."/>
            <person name="Spelt C.E."/>
            <person name="Veltkamp E."/>
            <person name="Nijkamp H.J.J."/>
        </authorList>
    </citation>
    <scope>NUCLEOTIDE SEQUENCE [GENOMIC DNA]</scope>
</reference>
<reference key="3">
    <citation type="journal article" date="2004" name="J. Biol. Chem.">
        <title>Targeting and translocation of two lipoproteins in Escherichia coli via the SRP/Sec/YidC pathway.</title>
        <authorList>
            <person name="Froderberg L."/>
            <person name="Houben E.N."/>
            <person name="Baars L."/>
            <person name="Luirink J."/>
            <person name="de Gier J.W."/>
        </authorList>
    </citation>
    <scope>TRANSLOCATION BY SRP/SEC/YIDC PATHWAY</scope>
</reference>